<sequence>MTYHKVSPDGRMSKEKENFFRYRNQLIVLNRYMH</sequence>
<protein>
    <recommendedName>
        <fullName>Uncharacterized protein HI_0870</fullName>
    </recommendedName>
</protein>
<reference key="1">
    <citation type="journal article" date="1995" name="Science">
        <title>Whole-genome random sequencing and assembly of Haemophilus influenzae Rd.</title>
        <authorList>
            <person name="Fleischmann R.D."/>
            <person name="Adams M.D."/>
            <person name="White O."/>
            <person name="Clayton R.A."/>
            <person name="Kirkness E.F."/>
            <person name="Kerlavage A.R."/>
            <person name="Bult C.J."/>
            <person name="Tomb J.-F."/>
            <person name="Dougherty B.A."/>
            <person name="Merrick J.M."/>
            <person name="McKenney K."/>
            <person name="Sutton G.G."/>
            <person name="FitzHugh W."/>
            <person name="Fields C.A."/>
            <person name="Gocayne J.D."/>
            <person name="Scott J.D."/>
            <person name="Shirley R."/>
            <person name="Liu L.-I."/>
            <person name="Glodek A."/>
            <person name="Kelley J.M."/>
            <person name="Weidman J.F."/>
            <person name="Phillips C.A."/>
            <person name="Spriggs T."/>
            <person name="Hedblom E."/>
            <person name="Cotton M.D."/>
            <person name="Utterback T.R."/>
            <person name="Hanna M.C."/>
            <person name="Nguyen D.T."/>
            <person name="Saudek D.M."/>
            <person name="Brandon R.C."/>
            <person name="Fine L.D."/>
            <person name="Fritchman J.L."/>
            <person name="Fuhrmann J.L."/>
            <person name="Geoghagen N.S.M."/>
            <person name="Gnehm C.L."/>
            <person name="McDonald L.A."/>
            <person name="Small K.V."/>
            <person name="Fraser C.M."/>
            <person name="Smith H.O."/>
            <person name="Venter J.C."/>
        </authorList>
    </citation>
    <scope>NUCLEOTIDE SEQUENCE [LARGE SCALE GENOMIC DNA]</scope>
    <source>
        <strain>ATCC 51907 / DSM 11121 / KW20 / Rd</strain>
    </source>
</reference>
<proteinExistence type="predicted"/>
<gene>
    <name type="ordered locus">HI_0870</name>
</gene>
<keyword id="KW-1185">Reference proteome</keyword>
<accession>P44065</accession>
<dbReference type="EMBL" id="L42023">
    <property type="protein sequence ID" value="AAC22529.1"/>
    <property type="molecule type" value="Genomic_DNA"/>
</dbReference>
<dbReference type="PIR" id="B64015">
    <property type="entry name" value="B64015"/>
</dbReference>
<dbReference type="SMR" id="P44065"/>
<dbReference type="STRING" id="71421.HI_0870"/>
<dbReference type="EnsemblBacteria" id="AAC22529">
    <property type="protein sequence ID" value="AAC22529"/>
    <property type="gene ID" value="HI_0870"/>
</dbReference>
<dbReference type="KEGG" id="hin:HI_0870"/>
<dbReference type="HOGENOM" id="CLU_3374032_0_0_6"/>
<dbReference type="Proteomes" id="UP000000579">
    <property type="component" value="Chromosome"/>
</dbReference>
<feature type="chain" id="PRO_0000077964" description="Uncharacterized protein HI_0870">
    <location>
        <begin position="1"/>
        <end position="34"/>
    </location>
</feature>
<organism>
    <name type="scientific">Haemophilus influenzae (strain ATCC 51907 / DSM 11121 / KW20 / Rd)</name>
    <dbReference type="NCBI Taxonomy" id="71421"/>
    <lineage>
        <taxon>Bacteria</taxon>
        <taxon>Pseudomonadati</taxon>
        <taxon>Pseudomonadota</taxon>
        <taxon>Gammaproteobacteria</taxon>
        <taxon>Pasteurellales</taxon>
        <taxon>Pasteurellaceae</taxon>
        <taxon>Haemophilus</taxon>
    </lineage>
</organism>
<name>Y870_HAEIN</name>